<organism>
    <name type="scientific">Xenopus tropicalis</name>
    <name type="common">Western clawed frog</name>
    <name type="synonym">Silurana tropicalis</name>
    <dbReference type="NCBI Taxonomy" id="8364"/>
    <lineage>
        <taxon>Eukaryota</taxon>
        <taxon>Metazoa</taxon>
        <taxon>Chordata</taxon>
        <taxon>Craniata</taxon>
        <taxon>Vertebrata</taxon>
        <taxon>Euteleostomi</taxon>
        <taxon>Amphibia</taxon>
        <taxon>Batrachia</taxon>
        <taxon>Anura</taxon>
        <taxon>Pipoidea</taxon>
        <taxon>Pipidae</taxon>
        <taxon>Xenopodinae</taxon>
        <taxon>Xenopus</taxon>
        <taxon>Silurana</taxon>
    </lineage>
</organism>
<gene>
    <name type="primary">lyset</name>
    <name type="synonym">C14orf109</name>
    <name type="synonym">tmem251</name>
    <name type="ORF">TEgg078g21.1</name>
</gene>
<protein>
    <recommendedName>
        <fullName>Lysosomal enzyme trafficking factor</fullName>
    </recommendedName>
    <alternativeName>
        <fullName>Transmembrane protein 251</fullName>
    </alternativeName>
</protein>
<keyword id="KW-0025">Alternative splicing</keyword>
<keyword id="KW-0333">Golgi apparatus</keyword>
<keyword id="KW-0472">Membrane</keyword>
<keyword id="KW-1185">Reference proteome</keyword>
<keyword id="KW-0812">Transmembrane</keyword>
<keyword id="KW-1133">Transmembrane helix</keyword>
<proteinExistence type="evidence at transcript level"/>
<reference key="1">
    <citation type="submission" date="2006-10" db="EMBL/GenBank/DDBJ databases">
        <authorList>
            <consortium name="Sanger Xenopus tropicalis EST/cDNA project"/>
        </authorList>
    </citation>
    <scope>NUCLEOTIDE SEQUENCE [LARGE SCALE MRNA] (ISOFORM 2)</scope>
    <source>
        <tissue>Egg</tissue>
    </source>
</reference>
<reference key="2">
    <citation type="submission" date="2006-11" db="EMBL/GenBank/DDBJ databases">
        <authorList>
            <consortium name="NIH - Xenopus Gene Collection (XGC) project"/>
        </authorList>
    </citation>
    <scope>NUCLEOTIDE SEQUENCE [LARGE SCALE MRNA] (ISOFORM 1)</scope>
    <source>
        <strain>N6</strain>
        <tissue>Lung</tissue>
    </source>
</reference>
<accession>Q5HZT8</accession>
<accession>A0JPC2</accession>
<accession>Q28GR7</accession>
<feature type="chain" id="PRO_0000359888" description="Lysosomal enzyme trafficking factor">
    <location>
        <begin position="1"/>
        <end position="162"/>
    </location>
</feature>
<feature type="transmembrane region" description="Helical" evidence="2">
    <location>
        <begin position="39"/>
        <end position="59"/>
    </location>
</feature>
<feature type="transmembrane region" description="Helical" evidence="2">
    <location>
        <begin position="97"/>
        <end position="117"/>
    </location>
</feature>
<feature type="splice variant" id="VSP_036174" description="In isoform 2." evidence="3">
    <location>
        <begin position="1"/>
        <end position="31"/>
    </location>
</feature>
<name>LYSET_XENTR</name>
<sequence>MWRVEFVACLRPSCQFCTAMCSILSAGRAWRMMNFRQRMGWIGVSLYLFVSAAAFYYVFEINETYNRLALEHVQLKPQEPHRGTTWTHSLKARLLSLPFWLWAALFLIPYFQVFLFLYSCTRADPKTVGYCIIPICLAIICNRHQSFVKASNQISRLQLIDT</sequence>
<comment type="function">
    <text evidence="1">Required for mannose-6-phosphate-dependent trafficking of lysosomal enzymes. LYSET bridges GlcNAc-1-phosphate transferase (GNPTAB), to the membrane-bound transcription factor site-1 protease (MBTPS1), thus allowing proteolytic activation of the GNPTAB. GNPTAB is involved in the regulation of M6P-dependent Golgi-to-lysosome trafficking of lysosomal enzymes. LYSET is thus an essential factor for maturation and delivery of lysosomal hydrolases.</text>
</comment>
<comment type="subcellular location">
    <subcellularLocation>
        <location evidence="1">Golgi apparatus membrane</location>
        <topology evidence="2">Multi-pass membrane protein</topology>
    </subcellularLocation>
</comment>
<comment type="alternative products">
    <event type="alternative splicing"/>
    <isoform>
        <id>Q5HZT8-1</id>
        <name>1</name>
        <sequence type="displayed"/>
    </isoform>
    <isoform>
        <id>Q5HZT8-2</id>
        <name>2</name>
        <sequence type="described" ref="VSP_036174"/>
    </isoform>
</comment>
<comment type="similarity">
    <text evidence="4">Belongs to the LYSET family.</text>
</comment>
<comment type="sequence caution" evidence="4">
    <conflict type="erroneous initiation">
        <sequence resource="EMBL-CDS" id="AAH88890"/>
    </conflict>
    <text>Extended N-terminus.</text>
</comment>
<comment type="sequence caution" evidence="4">
    <conflict type="erroneous initiation">
        <sequence resource="EMBL-CDS" id="AAI27356"/>
    </conflict>
    <text>Truncated N-terminus.</text>
</comment>
<dbReference type="EMBL" id="CR761254">
    <property type="protein sequence ID" value="CAJ82061.1"/>
    <property type="molecule type" value="mRNA"/>
</dbReference>
<dbReference type="EMBL" id="BC088890">
    <property type="protein sequence ID" value="AAH88890.1"/>
    <property type="status" value="ALT_INIT"/>
    <property type="molecule type" value="mRNA"/>
</dbReference>
<dbReference type="EMBL" id="BC127355">
    <property type="protein sequence ID" value="AAI27356.1"/>
    <property type="status" value="ALT_INIT"/>
    <property type="molecule type" value="mRNA"/>
</dbReference>
<dbReference type="RefSeq" id="NP_001032343.1">
    <property type="nucleotide sequence ID" value="NM_001037266.1"/>
</dbReference>
<dbReference type="RefSeq" id="XP_012823780.1">
    <molecule id="Q5HZT8-1"/>
    <property type="nucleotide sequence ID" value="XM_012968326.2"/>
</dbReference>
<dbReference type="SMR" id="Q5HZT8"/>
<dbReference type="FunCoup" id="Q5HZT8">
    <property type="interactions" value="499"/>
</dbReference>
<dbReference type="PaxDb" id="8364-ENSXETP00000056707"/>
<dbReference type="DNASU" id="497000"/>
<dbReference type="GeneID" id="497000"/>
<dbReference type="KEGG" id="xtr:497000"/>
<dbReference type="AGR" id="Xenbase:XB-GENE-971513"/>
<dbReference type="CTD" id="26175"/>
<dbReference type="Xenbase" id="XB-GENE-971513">
    <property type="gene designation" value="lyset"/>
</dbReference>
<dbReference type="eggNOG" id="ENOG502RY2J">
    <property type="taxonomic scope" value="Eukaryota"/>
</dbReference>
<dbReference type="HOGENOM" id="CLU_133007_0_0_1"/>
<dbReference type="InParanoid" id="Q5HZT8"/>
<dbReference type="OMA" id="AYYIFEV"/>
<dbReference type="OrthoDB" id="6273523at2759"/>
<dbReference type="PhylomeDB" id="Q5HZT8"/>
<dbReference type="TreeFam" id="TF332722"/>
<dbReference type="Proteomes" id="UP000008143">
    <property type="component" value="Chromosome 8"/>
</dbReference>
<dbReference type="Bgee" id="ENSXETG00000027035">
    <property type="expression patterns" value="Expressed in ovary and 15 other cell types or tissues"/>
</dbReference>
<dbReference type="GO" id="GO:0005794">
    <property type="term" value="C:Golgi apparatus"/>
    <property type="evidence" value="ECO:0000250"/>
    <property type="project" value="UniProtKB"/>
</dbReference>
<dbReference type="GO" id="GO:0000139">
    <property type="term" value="C:Golgi membrane"/>
    <property type="evidence" value="ECO:0007669"/>
    <property type="project" value="UniProtKB-SubCell"/>
</dbReference>
<dbReference type="GO" id="GO:0007040">
    <property type="term" value="P:lysosome organization"/>
    <property type="evidence" value="ECO:0000250"/>
    <property type="project" value="UniProtKB"/>
</dbReference>
<dbReference type="GO" id="GO:0060627">
    <property type="term" value="P:regulation of vesicle-mediated transport"/>
    <property type="evidence" value="ECO:0000250"/>
    <property type="project" value="UniProtKB"/>
</dbReference>
<dbReference type="InterPro" id="IPR028024">
    <property type="entry name" value="LYSET"/>
</dbReference>
<dbReference type="PANTHER" id="PTHR31925:SF1">
    <property type="entry name" value="LYSOSOMAL ENZYME TRAFFICKING FACTOR"/>
    <property type="match status" value="1"/>
</dbReference>
<dbReference type="PANTHER" id="PTHR31925">
    <property type="entry name" value="TRANSMEMBRANE PROTEIN 251"/>
    <property type="match status" value="1"/>
</dbReference>
<dbReference type="Pfam" id="PF15190">
    <property type="entry name" value="TMEM251"/>
    <property type="match status" value="1"/>
</dbReference>
<evidence type="ECO:0000250" key="1">
    <source>
        <dbReference type="UniProtKB" id="Q8N6I4"/>
    </source>
</evidence>
<evidence type="ECO:0000255" key="2"/>
<evidence type="ECO:0000303" key="3">
    <source ref="1"/>
</evidence>
<evidence type="ECO:0000305" key="4"/>